<organism>
    <name type="scientific">Vaccinia virus (strain Western Reserve)</name>
    <name type="common">VACV</name>
    <name type="synonym">Vaccinia virus (strain WR)</name>
    <dbReference type="NCBI Taxonomy" id="10254"/>
    <lineage>
        <taxon>Viruses</taxon>
        <taxon>Varidnaviria</taxon>
        <taxon>Bamfordvirae</taxon>
        <taxon>Nucleocytoviricota</taxon>
        <taxon>Pokkesviricetes</taxon>
        <taxon>Chitovirales</taxon>
        <taxon>Poxviridae</taxon>
        <taxon>Chordopoxvirinae</taxon>
        <taxon>Orthopoxvirus</taxon>
        <taxon>Vaccinia virus</taxon>
    </lineage>
</organism>
<comment type="function">
    <text evidence="3 4">Component of the entry fusion complex (EFC), which consists of 11 proteins. During cell infection, this complex mediates entry of the virion core into the host cytoplasm by a two-step mechanism consisting of lipid mixing of the viral and cellular membranes and subsequent pore formation.</text>
</comment>
<comment type="subunit">
    <text evidence="6">Component of the entry fusion complex (EFC) composed of OPG053/F9, OPG076/O3, OPG086/G3, OPG094/G9, OPG095/L1, OPG099/L5, OPG107/H2, OPG143/A16, OPG104/J5, OPG147/A21 and OPG155/A28. Except for OPG095/L1 and OPG053/F9, each of the EFC proteins is required for assembly or stability of the complex.</text>
</comment>
<comment type="subcellular location">
    <subcellularLocation>
        <location evidence="6">Virion membrane</location>
        <topology evidence="5">Single-pass membrane protein</topology>
    </subcellularLocation>
    <text evidence="2 6">Localizes in cytoplasmic virus factories. Component of the membrane of the mature virion.</text>
</comment>
<comment type="induction">
    <text evidence="3">Expressed in the intermediate phase of the viral replicative cycle.</text>
</comment>
<comment type="PTM">
    <text evidence="6">Unglycosylated because produced in viral factories instead of the classic ER -Golgi route.</text>
</comment>
<comment type="similarity">
    <text evidence="5">Belongs to the orthopoxvirus OPG076 family.</text>
</comment>
<dbReference type="EMBL" id="AY243312">
    <property type="status" value="NOT_ANNOTATED_CDS"/>
    <property type="molecule type" value="Genomic_DNA"/>
</dbReference>
<dbReference type="Proteomes" id="UP000000344">
    <property type="component" value="Genome"/>
</dbReference>
<dbReference type="GO" id="GO:0016020">
    <property type="term" value="C:membrane"/>
    <property type="evidence" value="ECO:0007669"/>
    <property type="project" value="UniProtKB-KW"/>
</dbReference>
<dbReference type="GO" id="GO:0019031">
    <property type="term" value="C:viral envelope"/>
    <property type="evidence" value="ECO:0007669"/>
    <property type="project" value="UniProtKB-KW"/>
</dbReference>
<dbReference type="GO" id="GO:0055036">
    <property type="term" value="C:virion membrane"/>
    <property type="evidence" value="ECO:0007669"/>
    <property type="project" value="UniProtKB-SubCell"/>
</dbReference>
<dbReference type="GO" id="GO:0046718">
    <property type="term" value="P:symbiont entry into host cell"/>
    <property type="evidence" value="ECO:0007669"/>
    <property type="project" value="UniProtKB-KW"/>
</dbReference>
<name>PG076_VACCW</name>
<gene>
    <name type="primary">OPG076</name>
    <name type="ordered locus">VACWR069.5</name>
    <name type="ORF">O3L</name>
</gene>
<sequence>MLVVIMFFIAFAFCSWLSYSYLRPYISTKELNKSR</sequence>
<keyword id="KW-0472">Membrane</keyword>
<keyword id="KW-1185">Reference proteome</keyword>
<keyword id="KW-0812">Transmembrane</keyword>
<keyword id="KW-1133">Transmembrane helix</keyword>
<keyword id="KW-0261">Viral envelope protein</keyword>
<keyword id="KW-1162">Viral penetration into host cytoplasm</keyword>
<keyword id="KW-0946">Virion</keyword>
<keyword id="KW-1160">Virus entry into host cell</keyword>
<feature type="chain" id="PRO_0000411966" description="Entry-fusion complex protein OPG076">
    <location>
        <begin position="1"/>
        <end position="35"/>
    </location>
</feature>
<feature type="transmembrane region" description="Helical" evidence="1">
    <location>
        <begin position="2"/>
        <end position="22"/>
    </location>
</feature>
<feature type="topological domain" description="Virion surface" evidence="1">
    <location>
        <begin position="23"/>
        <end position="35"/>
    </location>
</feature>
<protein>
    <recommendedName>
        <fullName>Entry-fusion complex protein OPG076</fullName>
        <shortName>EFC protein OPG076</shortName>
    </recommendedName>
</protein>
<reference key="1">
    <citation type="submission" date="2003-02" db="EMBL/GenBank/DDBJ databases">
        <title>Sequencing of the coding region of Vaccinia-WR to an average 9-fold redundancy and an error rate of 0.16/10kb.</title>
        <authorList>
            <person name="Esposito J.J."/>
            <person name="Frace A.M."/>
            <person name="Sammons S.A."/>
            <person name="Olsen-Rasmussen M."/>
            <person name="Osborne J."/>
            <person name="Wohlhueter R."/>
        </authorList>
    </citation>
    <scope>NUCLEOTIDE SEQUENCE [LARGE SCALE GENOMIC DNA]</scope>
</reference>
<reference key="2">
    <citation type="journal article" date="2009" name="J. Virol.">
        <title>Characterization of a newly identified 35-amino-acid component of the vaccinia virus entry/fusion complex conserved in all chordopoxviruses.</title>
        <authorList>
            <person name="Satheshkumar P.S."/>
            <person name="Moss B."/>
        </authorList>
    </citation>
    <scope>CHARACTERIZATION</scope>
    <scope>SUBCELLULAR LOCATION</scope>
</reference>
<reference key="3">
    <citation type="journal article" date="2015" name="J. Virol.">
        <title>Deciphering poxvirus gene expression by RNA sequencing and ribosome profiling.</title>
        <authorList>
            <person name="Yang Z."/>
            <person name="Cao S."/>
            <person name="Martens C.A."/>
            <person name="Porcella S.F."/>
            <person name="Xie Z."/>
            <person name="Ma M."/>
            <person name="Shen B."/>
            <person name="Moss B."/>
        </authorList>
    </citation>
    <scope>INDUCTION</scope>
</reference>
<reference key="4">
    <citation type="journal article" date="2021" name="J. Virol.">
        <title>Insights into the Organization of the Poxvirus Multicomponent Entry-Fusion Complex from Proximity Analyses in Living Infected Cells.</title>
        <authorList>
            <person name="Schin A.M."/>
            <person name="Diesterbeck U.S."/>
            <person name="Moss B."/>
        </authorList>
    </citation>
    <scope>FUNCTION</scope>
</reference>
<proteinExistence type="evidence at protein level"/>
<organismHost>
    <name type="scientific">Bos taurus</name>
    <name type="common">Bovine</name>
    <dbReference type="NCBI Taxonomy" id="9913"/>
</organismHost>
<evidence type="ECO:0000255" key="1"/>
<evidence type="ECO:0000269" key="2">
    <source>
    </source>
</evidence>
<evidence type="ECO:0000269" key="3">
    <source>
    </source>
</evidence>
<evidence type="ECO:0000269" key="4">
    <source>
    </source>
</evidence>
<evidence type="ECO:0000305" key="5"/>
<evidence type="ECO:0000305" key="6">
    <source>
    </source>
</evidence>
<accession>P0CK21</accession>